<reference key="1">
    <citation type="journal article" date="1994" name="Mol. Gen. Genet.">
        <title>Molecular and genetic characterization of the rhizopine catabolism (mocABRC) genes of Rhizobium meliloti L5-30.</title>
        <authorList>
            <person name="Rossbach S."/>
            <person name="Kulpa D.A."/>
            <person name="Rossbach U."/>
            <person name="de Bruijn F.J."/>
        </authorList>
    </citation>
    <scope>NUCLEOTIDE SEQUENCE [GENOMIC DNA]</scope>
    <source>
        <strain>L5-30</strain>
    </source>
</reference>
<sequence>MKAEDPPFGRNSLMSIKIAINPITWTNDDVPELGGDTPLEQCLSEMRQAGYAGTELGGKYPRQSAALKRVLDLYGLELASGWWDGRLYERDVDAEFEAILPHLTLLRDLGARHVVYADTSMGRHDGIRQPISKRPRLRGEEWEAYGRKLTDLAERMAEFGVGLAFHHHMGTIVETDEEVDRLMSVTGERVGLLFDSGHSAFSGGDPVALCVRHAKRIVHVHCKDVRGDVLRAAREGDLSFMDAVLEGIFTVPGDGGVDFPSILENLAKTGYRGWLVVEAEQDPNQAHPLTYAKMGHENLARMAAAAGFRLSSADAFDWIDTRQNV</sequence>
<feature type="chain" id="PRO_0000096530" description="Rhizopine catabolism protein MocC">
    <location>
        <begin position="1"/>
        <end position="325"/>
    </location>
</feature>
<proteinExistence type="inferred from homology"/>
<evidence type="ECO:0000305" key="1"/>
<dbReference type="EMBL" id="X78503">
    <property type="protein sequence ID" value="CAA55266.1"/>
    <property type="molecule type" value="Genomic_DNA"/>
</dbReference>
<dbReference type="PIR" id="S51569">
    <property type="entry name" value="S51569"/>
</dbReference>
<dbReference type="SMR" id="P49304"/>
<dbReference type="Gene3D" id="3.20.20.150">
    <property type="entry name" value="Divalent-metal-dependent TIM barrel enzymes"/>
    <property type="match status" value="1"/>
</dbReference>
<dbReference type="InterPro" id="IPR030823">
    <property type="entry name" value="IolE/MocC"/>
</dbReference>
<dbReference type="InterPro" id="IPR050312">
    <property type="entry name" value="IolE/XylAMocC-like"/>
</dbReference>
<dbReference type="InterPro" id="IPR036237">
    <property type="entry name" value="Xyl_isomerase-like_sf"/>
</dbReference>
<dbReference type="InterPro" id="IPR013022">
    <property type="entry name" value="Xyl_isomerase-like_TIM-brl"/>
</dbReference>
<dbReference type="NCBIfam" id="TIGR04379">
    <property type="entry name" value="myo_inos_iolE"/>
    <property type="match status" value="1"/>
</dbReference>
<dbReference type="PANTHER" id="PTHR12110">
    <property type="entry name" value="HYDROXYPYRUVATE ISOMERASE"/>
    <property type="match status" value="1"/>
</dbReference>
<dbReference type="PANTHER" id="PTHR12110:SF41">
    <property type="entry name" value="INOSOSE DEHYDRATASE"/>
    <property type="match status" value="1"/>
</dbReference>
<dbReference type="Pfam" id="PF01261">
    <property type="entry name" value="AP_endonuc_2"/>
    <property type="match status" value="1"/>
</dbReference>
<dbReference type="SUPFAM" id="SSF51658">
    <property type="entry name" value="Xylose isomerase-like"/>
    <property type="match status" value="1"/>
</dbReference>
<organism>
    <name type="scientific">Rhizobium meliloti</name>
    <name type="common">Ensifer meliloti</name>
    <name type="synonym">Sinorhizobium meliloti</name>
    <dbReference type="NCBI Taxonomy" id="382"/>
    <lineage>
        <taxon>Bacteria</taxon>
        <taxon>Pseudomonadati</taxon>
        <taxon>Pseudomonadota</taxon>
        <taxon>Alphaproteobacteria</taxon>
        <taxon>Hyphomicrobiales</taxon>
        <taxon>Rhizobiaceae</taxon>
        <taxon>Sinorhizobium/Ensifer group</taxon>
        <taxon>Sinorhizobium</taxon>
    </lineage>
</organism>
<gene>
    <name type="primary">mocC</name>
</gene>
<accession>P49304</accession>
<comment type="function">
    <text>Involved in rhizopine (L-3-O-methyl-scyllo-inosamine) catabolism.</text>
</comment>
<comment type="similarity">
    <text evidence="1">Belongs to the IolE/MocC family.</text>
</comment>
<name>MOCC_RHIML</name>
<protein>
    <recommendedName>
        <fullName>Rhizopine catabolism protein MocC</fullName>
    </recommendedName>
</protein>